<organism>
    <name type="scientific">Nostoc punctiforme (strain ATCC 29133 / PCC 73102)</name>
    <dbReference type="NCBI Taxonomy" id="63737"/>
    <lineage>
        <taxon>Bacteria</taxon>
        <taxon>Bacillati</taxon>
        <taxon>Cyanobacteriota</taxon>
        <taxon>Cyanophyceae</taxon>
        <taxon>Nostocales</taxon>
        <taxon>Nostocaceae</taxon>
        <taxon>Nostoc</taxon>
    </lineage>
</organism>
<sequence>MSFTSMPSLREQQHPLIRQLADCIEAAWHQHLDLSPYHLPDELGYVEGRLEGEKLTIENRCYQTPQFRKMHLELANIGNMLDILHCVMFPRPQYNLPMFGCDLVGGRGQISAAIADLSPIQLERTLPESYTTALAQLPVLNFSQPRELPEWGNIFSDFCIFVRPGSPEEEAMFLSRVREFLDIHCMQAIASHPVSVEQVTQNLAGQHNYCTKQQQNDKTRRVLEKAFGPVWAENYMTTVLFDLPT</sequence>
<proteinExistence type="inferred from homology"/>
<dbReference type="EC" id="1.3.7.5"/>
<dbReference type="EMBL" id="AF339057">
    <property type="protein sequence ID" value="AAK38588.1"/>
    <property type="molecule type" value="Genomic_DNA"/>
</dbReference>
<dbReference type="EMBL" id="CP001037">
    <property type="protein sequence ID" value="ACC83882.1"/>
    <property type="molecule type" value="Genomic_DNA"/>
</dbReference>
<dbReference type="RefSeq" id="WP_012411826.1">
    <property type="nucleotide sequence ID" value="NC_010628.1"/>
</dbReference>
<dbReference type="SMR" id="Q93TM9"/>
<dbReference type="STRING" id="63737.Npun_R5577"/>
<dbReference type="DNASU" id="6254918"/>
<dbReference type="EnsemblBacteria" id="ACC83882">
    <property type="protein sequence ID" value="ACC83882"/>
    <property type="gene ID" value="Npun_R5577"/>
</dbReference>
<dbReference type="KEGG" id="npu:Npun_R5577"/>
<dbReference type="eggNOG" id="ENOG502Z7RN">
    <property type="taxonomic scope" value="Bacteria"/>
</dbReference>
<dbReference type="HOGENOM" id="CLU_074224_0_0_3"/>
<dbReference type="OrthoDB" id="581340at2"/>
<dbReference type="PhylomeDB" id="Q93TM9"/>
<dbReference type="BRENDA" id="1.3.7.5">
    <property type="organism ID" value="4370"/>
</dbReference>
<dbReference type="Proteomes" id="UP000001191">
    <property type="component" value="Chromosome"/>
</dbReference>
<dbReference type="GO" id="GO:0050897">
    <property type="term" value="F:cobalt ion binding"/>
    <property type="evidence" value="ECO:0007669"/>
    <property type="project" value="InterPro"/>
</dbReference>
<dbReference type="GO" id="GO:0050620">
    <property type="term" value="F:phycocyanobilin:ferredoxin oxidoreductase activity"/>
    <property type="evidence" value="ECO:0007669"/>
    <property type="project" value="UniProtKB-UniRule"/>
</dbReference>
<dbReference type="GO" id="GO:0010024">
    <property type="term" value="P:phytochromobilin biosynthetic process"/>
    <property type="evidence" value="ECO:0007669"/>
    <property type="project" value="InterPro"/>
</dbReference>
<dbReference type="Gene3D" id="3.40.1500.20">
    <property type="match status" value="1"/>
</dbReference>
<dbReference type="HAMAP" id="MF_00618">
    <property type="entry name" value="Ferredoxin_bilin_red"/>
    <property type="match status" value="1"/>
</dbReference>
<dbReference type="InterPro" id="IPR009249">
    <property type="entry name" value="Ferredoxin-dep_bilin_Rdtase"/>
</dbReference>
<dbReference type="InterPro" id="IPR022870">
    <property type="entry name" value="Ferredoxin_bilin_OxRdtase"/>
</dbReference>
<dbReference type="NCBIfam" id="NF002760">
    <property type="entry name" value="PRK02816.1"/>
    <property type="match status" value="1"/>
</dbReference>
<dbReference type="PANTHER" id="PTHR34557">
    <property type="entry name" value="PHYTOCHROMOBILIN:FERREDOXIN OXIDOREDUCTASE, CHLOROPLASTIC"/>
    <property type="match status" value="1"/>
</dbReference>
<dbReference type="PANTHER" id="PTHR34557:SF1">
    <property type="entry name" value="PHYTOCHROMOBILIN:FERREDOXIN OXIDOREDUCTASE, CHLOROPLASTIC"/>
    <property type="match status" value="1"/>
</dbReference>
<dbReference type="Pfam" id="PF05996">
    <property type="entry name" value="Fe_bilin_red"/>
    <property type="match status" value="1"/>
</dbReference>
<accession>Q93TM9</accession>
<accession>B2J6V6</accession>
<name>PCYA_NOSP7</name>
<keyword id="KW-0560">Oxidoreductase</keyword>
<keyword id="KW-1185">Reference proteome</keyword>
<feature type="chain" id="PRO_0000216740" description="Phycocyanobilin:ferredoxin oxidoreductase">
    <location>
        <begin position="1"/>
        <end position="245"/>
    </location>
</feature>
<comment type="function">
    <text>Catalyzes the four-electron reduction of biliverdin IX-alpha (2-electron reduction at both the A and D rings); the reaction proceeds via an isolatable 2-electron intermediate, 181,182-dihydrobiliverdin.</text>
</comment>
<comment type="catalytic activity">
    <reaction>
        <text>(2R,3Z)-phycocyanobilin + 4 oxidized [2Fe-2S]-[ferredoxin] = biliverdin IXalpha + 4 reduced [2Fe-2S]-[ferredoxin] + 4 H(+)</text>
        <dbReference type="Rhea" id="RHEA:15309"/>
        <dbReference type="Rhea" id="RHEA-COMP:10000"/>
        <dbReference type="Rhea" id="RHEA-COMP:10001"/>
        <dbReference type="ChEBI" id="CHEBI:15378"/>
        <dbReference type="ChEBI" id="CHEBI:33737"/>
        <dbReference type="ChEBI" id="CHEBI:33738"/>
        <dbReference type="ChEBI" id="CHEBI:57437"/>
        <dbReference type="ChEBI" id="CHEBI:57991"/>
        <dbReference type="EC" id="1.3.7.5"/>
    </reaction>
</comment>
<comment type="similarity">
    <text evidence="1">Belongs to the HY2 family.</text>
</comment>
<gene>
    <name type="primary">pcyA</name>
    <name type="ordered locus">Npun_R5577</name>
</gene>
<reference key="1">
    <citation type="journal article" date="2001" name="Plant Cell">
        <title>Functional genomic analysis of the HY2 family of ferredoxin-dependent bilin reductases from oxygenic photosynthetic organisms.</title>
        <authorList>
            <person name="Frankenberg N."/>
            <person name="Mukougawa K."/>
            <person name="Kohchi T."/>
            <person name="Lagarias J.C."/>
        </authorList>
    </citation>
    <scope>NUCLEOTIDE SEQUENCE [GENOMIC DNA]</scope>
</reference>
<reference key="2">
    <citation type="journal article" date="2013" name="Plant Physiol.">
        <title>A Nostoc punctiforme Sugar Transporter Necessary to Establish a Cyanobacterium-Plant Symbiosis.</title>
        <authorList>
            <person name="Ekman M."/>
            <person name="Picossi S."/>
            <person name="Campbell E.L."/>
            <person name="Meeks J.C."/>
            <person name="Flores E."/>
        </authorList>
    </citation>
    <scope>NUCLEOTIDE SEQUENCE [LARGE SCALE GENOMIC DNA]</scope>
    <source>
        <strain>ATCC 29133 / PCC 73102</strain>
    </source>
</reference>
<evidence type="ECO:0000305" key="1"/>
<protein>
    <recommendedName>
        <fullName>Phycocyanobilin:ferredoxin oxidoreductase</fullName>
        <ecNumber>1.3.7.5</ecNumber>
    </recommendedName>
</protein>